<keyword id="KW-0143">Chaperone</keyword>
<keyword id="KW-0963">Cytoplasm</keyword>
<keyword id="KW-0496">Mitochondrion</keyword>
<keyword id="KW-1185">Reference proteome</keyword>
<keyword id="KW-0809">Transit peptide</keyword>
<dbReference type="EMBL" id="AB006700">
    <property type="protein sequence ID" value="BAB08963.1"/>
    <property type="status" value="ALT_INIT"/>
    <property type="molecule type" value="Genomic_DNA"/>
</dbReference>
<dbReference type="EMBL" id="CP002688">
    <property type="protein sequence ID" value="AED91011.1"/>
    <property type="molecule type" value="Genomic_DNA"/>
</dbReference>
<dbReference type="EMBL" id="AY128407">
    <property type="protein sequence ID" value="AAM91610.1"/>
    <property type="molecule type" value="mRNA"/>
</dbReference>
<dbReference type="EMBL" id="BT000065">
    <property type="protein sequence ID" value="AAN15384.1"/>
    <property type="molecule type" value="mRNA"/>
</dbReference>
<dbReference type="RefSeq" id="NP_196259.2">
    <property type="nucleotide sequence ID" value="NM_120724.3"/>
</dbReference>
<dbReference type="SMR" id="Q8L7K4"/>
<dbReference type="FunCoup" id="Q8L7K4">
    <property type="interactions" value="2372"/>
</dbReference>
<dbReference type="IntAct" id="Q8L7K4">
    <property type="interactions" value="1"/>
</dbReference>
<dbReference type="STRING" id="3702.Q8L7K4"/>
<dbReference type="SwissPalm" id="Q8L7K4"/>
<dbReference type="PaxDb" id="3702-AT5G06410.1"/>
<dbReference type="ProteomicsDB" id="193285"/>
<dbReference type="EnsemblPlants" id="AT5G06410.1">
    <property type="protein sequence ID" value="AT5G06410.1"/>
    <property type="gene ID" value="AT5G06410"/>
</dbReference>
<dbReference type="GeneID" id="830529"/>
<dbReference type="Gramene" id="AT5G06410.1">
    <property type="protein sequence ID" value="AT5G06410.1"/>
    <property type="gene ID" value="AT5G06410"/>
</dbReference>
<dbReference type="KEGG" id="ath:AT5G06410"/>
<dbReference type="Araport" id="AT5G06410"/>
<dbReference type="TAIR" id="AT5G06410">
    <property type="gene designation" value="HSCB"/>
</dbReference>
<dbReference type="eggNOG" id="KOG3192">
    <property type="taxonomic scope" value="Eukaryota"/>
</dbReference>
<dbReference type="HOGENOM" id="CLU_068529_0_0_1"/>
<dbReference type="InParanoid" id="Q8L7K4"/>
<dbReference type="OMA" id="CRCIQPV"/>
<dbReference type="PhylomeDB" id="Q8L7K4"/>
<dbReference type="PRO" id="PR:Q8L7K4"/>
<dbReference type="Proteomes" id="UP000006548">
    <property type="component" value="Chromosome 5"/>
</dbReference>
<dbReference type="ExpressionAtlas" id="Q8L7K4">
    <property type="expression patterns" value="baseline and differential"/>
</dbReference>
<dbReference type="GO" id="GO:0005829">
    <property type="term" value="C:cytosol"/>
    <property type="evidence" value="ECO:0000314"/>
    <property type="project" value="UniProtKB"/>
</dbReference>
<dbReference type="GO" id="GO:0005739">
    <property type="term" value="C:mitochondrion"/>
    <property type="evidence" value="ECO:0000314"/>
    <property type="project" value="UniProtKB"/>
</dbReference>
<dbReference type="GO" id="GO:0001671">
    <property type="term" value="F:ATPase activator activity"/>
    <property type="evidence" value="ECO:0007669"/>
    <property type="project" value="InterPro"/>
</dbReference>
<dbReference type="GO" id="GO:0051087">
    <property type="term" value="F:protein-folding chaperone binding"/>
    <property type="evidence" value="ECO:0007669"/>
    <property type="project" value="InterPro"/>
</dbReference>
<dbReference type="GO" id="GO:0044571">
    <property type="term" value="P:[2Fe-2S] cluster assembly"/>
    <property type="evidence" value="ECO:0007669"/>
    <property type="project" value="InterPro"/>
</dbReference>
<dbReference type="GO" id="GO:0016226">
    <property type="term" value="P:iron-sulfur cluster assembly"/>
    <property type="evidence" value="ECO:0000315"/>
    <property type="project" value="UniProtKB"/>
</dbReference>
<dbReference type="GO" id="GO:0051259">
    <property type="term" value="P:protein complex oligomerization"/>
    <property type="evidence" value="ECO:0007669"/>
    <property type="project" value="InterPro"/>
</dbReference>
<dbReference type="FunFam" id="1.20.1280.20:FF:000002">
    <property type="entry name" value="HscB mitochondrial iron-sulfur cluster co-chaperone"/>
    <property type="match status" value="1"/>
</dbReference>
<dbReference type="FunFam" id="1.10.287.110:FF:000082">
    <property type="entry name" value="Iron-sulfur cluster co-chaperone protein HscB, mitochondrial"/>
    <property type="match status" value="1"/>
</dbReference>
<dbReference type="Gene3D" id="1.10.287.110">
    <property type="entry name" value="DnaJ domain"/>
    <property type="match status" value="1"/>
</dbReference>
<dbReference type="Gene3D" id="1.20.1280.20">
    <property type="entry name" value="HscB, C-terminal domain"/>
    <property type="match status" value="1"/>
</dbReference>
<dbReference type="InterPro" id="IPR001623">
    <property type="entry name" value="DnaJ_domain"/>
</dbReference>
<dbReference type="InterPro" id="IPR004640">
    <property type="entry name" value="HscB"/>
</dbReference>
<dbReference type="InterPro" id="IPR036386">
    <property type="entry name" value="HscB_C_sf"/>
</dbReference>
<dbReference type="InterPro" id="IPR009073">
    <property type="entry name" value="HscB_oligo_C"/>
</dbReference>
<dbReference type="InterPro" id="IPR036869">
    <property type="entry name" value="J_dom_sf"/>
</dbReference>
<dbReference type="NCBIfam" id="TIGR00714">
    <property type="entry name" value="hscB"/>
    <property type="match status" value="1"/>
</dbReference>
<dbReference type="PANTHER" id="PTHR14021">
    <property type="entry name" value="IRON-SULFUR CLUSTER CO-CHAPERONE PROTEIN HSCB"/>
    <property type="match status" value="1"/>
</dbReference>
<dbReference type="PANTHER" id="PTHR14021:SF15">
    <property type="entry name" value="IRON-SULFUR CLUSTER CO-CHAPERONE PROTEIN HSCB"/>
    <property type="match status" value="1"/>
</dbReference>
<dbReference type="Pfam" id="PF07743">
    <property type="entry name" value="HSCB_C"/>
    <property type="match status" value="1"/>
</dbReference>
<dbReference type="SUPFAM" id="SSF46565">
    <property type="entry name" value="Chaperone J-domain"/>
    <property type="match status" value="1"/>
</dbReference>
<dbReference type="SUPFAM" id="SSF47144">
    <property type="entry name" value="HSC20 (HSCB), C-terminal oligomerisation domain"/>
    <property type="match status" value="1"/>
</dbReference>
<dbReference type="PROSITE" id="PS50076">
    <property type="entry name" value="DNAJ_2"/>
    <property type="match status" value="1"/>
</dbReference>
<proteinExistence type="evidence at protein level"/>
<comment type="function">
    <text evidence="3 4">Co-chaperone required for the assembly of iron-sulfur [Fe-S] clusters in both mitochondria and cytosol (PubMed:19865480). Required for the activity of iron-sulfur proteins such as aconitase and succinate dehydrogenase (PubMed:19865480). Involved in iron homeostasis and may take part in the control of iron translocation from roots to shoots (PubMed:27655366).</text>
</comment>
<comment type="subunit">
    <text evidence="3">Interacts with ISU1 and HSP70-9/HSCA1.</text>
</comment>
<comment type="subcellular location">
    <subcellularLocation>
        <location evidence="3">Mitochondrion</location>
    </subcellularLocation>
    <subcellularLocation>
        <location evidence="3">Cytoplasm</location>
        <location evidence="3">Cytosol</location>
    </subcellularLocation>
</comment>
<comment type="disruption phenotype">
    <text evidence="3">Floral stems lacking the epicuticular wax layer, distorted leaf trichomes, and under-developed siliques with shrunked and non-viable seeds (PubMed:19865480). Strong reduction of the activity of iron-sulfur proteins such as aconitase and succinate dehydrogenase (PubMed:19865480).</text>
</comment>
<comment type="similarity">
    <text evidence="6">Belongs to the HscB family.</text>
</comment>
<comment type="sequence caution" evidence="6">
    <conflict type="erroneous initiation">
        <sequence resource="EMBL-CDS" id="BAB08963"/>
    </conflict>
    <text>Truncated N-terminus.</text>
</comment>
<feature type="transit peptide" description="Mitochondrion" evidence="1">
    <location>
        <begin position="1"/>
        <end position="59"/>
    </location>
</feature>
<feature type="chain" id="PRO_0000446286" description="Iron-sulfur cluster co-chaperone protein HscB homolog">
    <location>
        <begin position="60"/>
        <end position="252"/>
    </location>
</feature>
<feature type="domain" description="J" evidence="2">
    <location>
        <begin position="93"/>
        <end position="165"/>
    </location>
</feature>
<accession>Q8L7K4</accession>
<accession>Q9FNG7</accession>
<organism>
    <name type="scientific">Arabidopsis thaliana</name>
    <name type="common">Mouse-ear cress</name>
    <dbReference type="NCBI Taxonomy" id="3702"/>
    <lineage>
        <taxon>Eukaryota</taxon>
        <taxon>Viridiplantae</taxon>
        <taxon>Streptophyta</taxon>
        <taxon>Embryophyta</taxon>
        <taxon>Tracheophyta</taxon>
        <taxon>Spermatophyta</taxon>
        <taxon>Magnoliopsida</taxon>
        <taxon>eudicotyledons</taxon>
        <taxon>Gunneridae</taxon>
        <taxon>Pentapetalae</taxon>
        <taxon>rosids</taxon>
        <taxon>malvids</taxon>
        <taxon>Brassicales</taxon>
        <taxon>Brassicaceae</taxon>
        <taxon>Camelineae</taxon>
        <taxon>Arabidopsis</taxon>
    </lineage>
</organism>
<name>HSCB_ARATH</name>
<evidence type="ECO:0000255" key="1"/>
<evidence type="ECO:0000255" key="2">
    <source>
        <dbReference type="PROSITE-ProRule" id="PRU00286"/>
    </source>
</evidence>
<evidence type="ECO:0000269" key="3">
    <source>
    </source>
</evidence>
<evidence type="ECO:0000269" key="4">
    <source>
    </source>
</evidence>
<evidence type="ECO:0000303" key="5">
    <source>
    </source>
</evidence>
<evidence type="ECO:0000305" key="6"/>
<evidence type="ECO:0000312" key="7">
    <source>
        <dbReference type="Araport" id="AT5G06410"/>
    </source>
</evidence>
<evidence type="ECO:0000312" key="8">
    <source>
        <dbReference type="EMBL" id="BAB08963.1"/>
    </source>
</evidence>
<sequence>MKKTKTMVASISTLIRRTYPSTNQCNSLATIQSQTQLPRESLQHHSSAEGRLRFSGRVFCSESGAGCWNCGEKAAFLFCNSCRSIQPVDDSVDYFQIFGLEKKYEIDPGSLEGKYKDWQKKLHPDLVHNKSKKERDYAAEQSAKVTEACRTLTKRLSRAMYIMKLNGVNVNEEETITDPTLLMEIMELREAISEADDSTSLNQIRSQVQEKLKQWSDSFVEAFESQKFDDAVKCIQRMTYYERACEEILKKL</sequence>
<reference key="1">
    <citation type="journal article" date="1997" name="DNA Res.">
        <title>Structural analysis of Arabidopsis thaliana chromosome 5. II. Sequence features of the regions of 1,044,062 bp covered by thirteen physically assigned P1 clones.</title>
        <authorList>
            <person name="Kotani H."/>
            <person name="Nakamura Y."/>
            <person name="Sato S."/>
            <person name="Kaneko T."/>
            <person name="Asamizu E."/>
            <person name="Miyajima N."/>
            <person name="Tabata S."/>
        </authorList>
    </citation>
    <scope>NUCLEOTIDE SEQUENCE [LARGE SCALE GENOMIC DNA]</scope>
    <source>
        <strain>cv. Columbia</strain>
    </source>
</reference>
<reference key="2">
    <citation type="journal article" date="2017" name="Plant J.">
        <title>Araport11: a complete reannotation of the Arabidopsis thaliana reference genome.</title>
        <authorList>
            <person name="Cheng C.Y."/>
            <person name="Krishnakumar V."/>
            <person name="Chan A.P."/>
            <person name="Thibaud-Nissen F."/>
            <person name="Schobel S."/>
            <person name="Town C.D."/>
        </authorList>
    </citation>
    <scope>GENOME REANNOTATION</scope>
    <source>
        <strain>cv. Columbia</strain>
    </source>
</reference>
<reference key="3">
    <citation type="journal article" date="2003" name="Science">
        <title>Empirical analysis of transcriptional activity in the Arabidopsis genome.</title>
        <authorList>
            <person name="Yamada K."/>
            <person name="Lim J."/>
            <person name="Dale J.M."/>
            <person name="Chen H."/>
            <person name="Shinn P."/>
            <person name="Palm C.J."/>
            <person name="Southwick A.M."/>
            <person name="Wu H.C."/>
            <person name="Kim C.J."/>
            <person name="Nguyen M."/>
            <person name="Pham P.K."/>
            <person name="Cheuk R.F."/>
            <person name="Karlin-Newmann G."/>
            <person name="Liu S.X."/>
            <person name="Lam B."/>
            <person name="Sakano H."/>
            <person name="Wu T."/>
            <person name="Yu G."/>
            <person name="Miranda M."/>
            <person name="Quach H.L."/>
            <person name="Tripp M."/>
            <person name="Chang C.H."/>
            <person name="Lee J.M."/>
            <person name="Toriumi M.J."/>
            <person name="Chan M.M."/>
            <person name="Tang C.C."/>
            <person name="Onodera C.S."/>
            <person name="Deng J.M."/>
            <person name="Akiyama K."/>
            <person name="Ansari Y."/>
            <person name="Arakawa T."/>
            <person name="Banh J."/>
            <person name="Banno F."/>
            <person name="Bowser L."/>
            <person name="Brooks S.Y."/>
            <person name="Carninci P."/>
            <person name="Chao Q."/>
            <person name="Choy N."/>
            <person name="Enju A."/>
            <person name="Goldsmith A.D."/>
            <person name="Gurjal M."/>
            <person name="Hansen N.F."/>
            <person name="Hayashizaki Y."/>
            <person name="Johnson-Hopson C."/>
            <person name="Hsuan V.W."/>
            <person name="Iida K."/>
            <person name="Karnes M."/>
            <person name="Khan S."/>
            <person name="Koesema E."/>
            <person name="Ishida J."/>
            <person name="Jiang P.X."/>
            <person name="Jones T."/>
            <person name="Kawai J."/>
            <person name="Kamiya A."/>
            <person name="Meyers C."/>
            <person name="Nakajima M."/>
            <person name="Narusaka M."/>
            <person name="Seki M."/>
            <person name="Sakurai T."/>
            <person name="Satou M."/>
            <person name="Tamse R."/>
            <person name="Vaysberg M."/>
            <person name="Wallender E.K."/>
            <person name="Wong C."/>
            <person name="Yamamura Y."/>
            <person name="Yuan S."/>
            <person name="Shinozaki K."/>
            <person name="Davis R.W."/>
            <person name="Theologis A."/>
            <person name="Ecker J.R."/>
        </authorList>
    </citation>
    <scope>NUCLEOTIDE SEQUENCE [LARGE SCALE MRNA]</scope>
    <source>
        <strain>cv. Columbia</strain>
    </source>
</reference>
<reference key="4">
    <citation type="journal article" date="2009" name="PLoS ONE">
        <title>Dual localized AtHscB involved in iron sulfur protein biogenesis in Arabidopsis.</title>
        <authorList>
            <person name="Xu X.M."/>
            <person name="Lin H."/>
            <person name="Latijnhouwers M."/>
            <person name="Moeller S.G."/>
        </authorList>
    </citation>
    <scope>FUNCTION</scope>
    <scope>INTERACTION WITH HSP70-9/HSCA1 AND ISU1</scope>
    <scope>SUBCELLULAR LOCATION</scope>
    <scope>DISRUPTION PHENOTYPE</scope>
</reference>
<reference key="5">
    <citation type="journal article" date="2016" name="Plant Mol. Biol.">
        <title>Altered levels of AtHSCB disrupts iron translocation from roots to shoots.</title>
        <authorList>
            <person name="Leaden L."/>
            <person name="Pagani M.A."/>
            <person name="Balparda M."/>
            <person name="Busi M.V."/>
            <person name="Gomez-Casati D.F."/>
        </authorList>
    </citation>
    <scope>FUNCTION</scope>
    <scope>DISRUPTION PHENOTYPE</scope>
</reference>
<gene>
    <name evidence="5" type="primary">HSCB</name>
    <name evidence="7" type="ordered locus">At5g06410</name>
    <name evidence="8" type="ORF">MHF15.7</name>
</gene>
<protein>
    <recommendedName>
        <fullName evidence="6">Iron-sulfur cluster co-chaperone protein HscB homolog</fullName>
        <shortName evidence="5">AtHscB</shortName>
    </recommendedName>
</protein>